<evidence type="ECO:0000250" key="1"/>
<evidence type="ECO:0000255" key="2">
    <source>
        <dbReference type="HAMAP-Rule" id="MF_00141"/>
    </source>
</evidence>
<protein>
    <recommendedName>
        <fullName evidence="2">Elongation factor P</fullName>
        <shortName evidence="2">EF-P</shortName>
    </recommendedName>
</protein>
<proteinExistence type="inferred from homology"/>
<gene>
    <name evidence="2" type="primary">efp</name>
    <name type="ordered locus">SPA4151</name>
</gene>
<reference key="1">
    <citation type="journal article" date="2004" name="Nat. Genet.">
        <title>Comparison of genome degradation in Paratyphi A and Typhi, human-restricted serovars of Salmonella enterica that cause typhoid.</title>
        <authorList>
            <person name="McClelland M."/>
            <person name="Sanderson K.E."/>
            <person name="Clifton S.W."/>
            <person name="Latreille P."/>
            <person name="Porwollik S."/>
            <person name="Sabo A."/>
            <person name="Meyer R."/>
            <person name="Bieri T."/>
            <person name="Ozersky P."/>
            <person name="McLellan M."/>
            <person name="Harkins C.R."/>
            <person name="Wang C."/>
            <person name="Nguyen C."/>
            <person name="Berghoff A."/>
            <person name="Elliott G."/>
            <person name="Kohlberg S."/>
            <person name="Strong C."/>
            <person name="Du F."/>
            <person name="Carter J."/>
            <person name="Kremizki C."/>
            <person name="Layman D."/>
            <person name="Leonard S."/>
            <person name="Sun H."/>
            <person name="Fulton L."/>
            <person name="Nash W."/>
            <person name="Miner T."/>
            <person name="Minx P."/>
            <person name="Delehaunty K."/>
            <person name="Fronick C."/>
            <person name="Magrini V."/>
            <person name="Nhan M."/>
            <person name="Warren W."/>
            <person name="Florea L."/>
            <person name="Spieth J."/>
            <person name="Wilson R.K."/>
        </authorList>
    </citation>
    <scope>NUCLEOTIDE SEQUENCE [LARGE SCALE GENOMIC DNA]</scope>
    <source>
        <strain>ATCC 9150 / SARB42</strain>
    </source>
</reference>
<keyword id="KW-0963">Cytoplasm</keyword>
<keyword id="KW-0251">Elongation factor</keyword>
<keyword id="KW-0379">Hydroxylation</keyword>
<keyword id="KW-0648">Protein biosynthesis</keyword>
<name>EFP_SALPA</name>
<dbReference type="EMBL" id="CP000026">
    <property type="protein sequence ID" value="AAV79892.1"/>
    <property type="molecule type" value="Genomic_DNA"/>
</dbReference>
<dbReference type="RefSeq" id="WP_000257282.1">
    <property type="nucleotide sequence ID" value="NC_006511.1"/>
</dbReference>
<dbReference type="SMR" id="Q5PL77"/>
<dbReference type="GeneID" id="66758562"/>
<dbReference type="KEGG" id="spt:SPA4151"/>
<dbReference type="HOGENOM" id="CLU_074944_0_0_6"/>
<dbReference type="UniPathway" id="UPA00345"/>
<dbReference type="Proteomes" id="UP000008185">
    <property type="component" value="Chromosome"/>
</dbReference>
<dbReference type="GO" id="GO:0005829">
    <property type="term" value="C:cytosol"/>
    <property type="evidence" value="ECO:0007669"/>
    <property type="project" value="UniProtKB-ARBA"/>
</dbReference>
<dbReference type="GO" id="GO:0003746">
    <property type="term" value="F:translation elongation factor activity"/>
    <property type="evidence" value="ECO:0007669"/>
    <property type="project" value="UniProtKB-UniRule"/>
</dbReference>
<dbReference type="GO" id="GO:0043043">
    <property type="term" value="P:peptide biosynthetic process"/>
    <property type="evidence" value="ECO:0007669"/>
    <property type="project" value="InterPro"/>
</dbReference>
<dbReference type="CDD" id="cd04470">
    <property type="entry name" value="S1_EF-P_repeat_1"/>
    <property type="match status" value="1"/>
</dbReference>
<dbReference type="CDD" id="cd05794">
    <property type="entry name" value="S1_EF-P_repeat_2"/>
    <property type="match status" value="1"/>
</dbReference>
<dbReference type="FunFam" id="2.30.30.30:FF:000003">
    <property type="entry name" value="Elongation factor P"/>
    <property type="match status" value="1"/>
</dbReference>
<dbReference type="FunFam" id="2.40.50.140:FF:000004">
    <property type="entry name" value="Elongation factor P"/>
    <property type="match status" value="1"/>
</dbReference>
<dbReference type="FunFam" id="2.40.50.140:FF:000009">
    <property type="entry name" value="Elongation factor P"/>
    <property type="match status" value="1"/>
</dbReference>
<dbReference type="Gene3D" id="2.30.30.30">
    <property type="match status" value="1"/>
</dbReference>
<dbReference type="Gene3D" id="2.40.50.140">
    <property type="entry name" value="Nucleic acid-binding proteins"/>
    <property type="match status" value="2"/>
</dbReference>
<dbReference type="HAMAP" id="MF_00141">
    <property type="entry name" value="EF_P"/>
    <property type="match status" value="1"/>
</dbReference>
<dbReference type="InterPro" id="IPR015365">
    <property type="entry name" value="Elong-fact-P_C"/>
</dbReference>
<dbReference type="InterPro" id="IPR012340">
    <property type="entry name" value="NA-bd_OB-fold"/>
</dbReference>
<dbReference type="InterPro" id="IPR014722">
    <property type="entry name" value="Rib_uL2_dom2"/>
</dbReference>
<dbReference type="InterPro" id="IPR020599">
    <property type="entry name" value="Transl_elong_fac_P/YeiP"/>
</dbReference>
<dbReference type="InterPro" id="IPR013185">
    <property type="entry name" value="Transl_elong_KOW-like"/>
</dbReference>
<dbReference type="InterPro" id="IPR001059">
    <property type="entry name" value="Transl_elong_P/YeiP_cen"/>
</dbReference>
<dbReference type="InterPro" id="IPR013852">
    <property type="entry name" value="Transl_elong_P/YeiP_CS"/>
</dbReference>
<dbReference type="InterPro" id="IPR011768">
    <property type="entry name" value="Transl_elongation_fac_P"/>
</dbReference>
<dbReference type="InterPro" id="IPR008991">
    <property type="entry name" value="Translation_prot_SH3-like_sf"/>
</dbReference>
<dbReference type="NCBIfam" id="TIGR00038">
    <property type="entry name" value="efp"/>
    <property type="match status" value="1"/>
</dbReference>
<dbReference type="NCBIfam" id="NF001810">
    <property type="entry name" value="PRK00529.1"/>
    <property type="match status" value="1"/>
</dbReference>
<dbReference type="PANTHER" id="PTHR30053">
    <property type="entry name" value="ELONGATION FACTOR P"/>
    <property type="match status" value="1"/>
</dbReference>
<dbReference type="PANTHER" id="PTHR30053:SF12">
    <property type="entry name" value="ELONGATION FACTOR P (EF-P) FAMILY PROTEIN"/>
    <property type="match status" value="1"/>
</dbReference>
<dbReference type="Pfam" id="PF01132">
    <property type="entry name" value="EFP"/>
    <property type="match status" value="1"/>
</dbReference>
<dbReference type="Pfam" id="PF08207">
    <property type="entry name" value="EFP_N"/>
    <property type="match status" value="1"/>
</dbReference>
<dbReference type="Pfam" id="PF09285">
    <property type="entry name" value="Elong-fact-P_C"/>
    <property type="match status" value="1"/>
</dbReference>
<dbReference type="PIRSF" id="PIRSF005901">
    <property type="entry name" value="EF-P"/>
    <property type="match status" value="1"/>
</dbReference>
<dbReference type="SMART" id="SM01185">
    <property type="entry name" value="EFP"/>
    <property type="match status" value="1"/>
</dbReference>
<dbReference type="SMART" id="SM00841">
    <property type="entry name" value="Elong-fact-P_C"/>
    <property type="match status" value="1"/>
</dbReference>
<dbReference type="SUPFAM" id="SSF50249">
    <property type="entry name" value="Nucleic acid-binding proteins"/>
    <property type="match status" value="2"/>
</dbReference>
<dbReference type="SUPFAM" id="SSF50104">
    <property type="entry name" value="Translation proteins SH3-like domain"/>
    <property type="match status" value="1"/>
</dbReference>
<dbReference type="PROSITE" id="PS01275">
    <property type="entry name" value="EFP"/>
    <property type="match status" value="1"/>
</dbReference>
<accession>Q5PL77</accession>
<organism>
    <name type="scientific">Salmonella paratyphi A (strain ATCC 9150 / SARB42)</name>
    <dbReference type="NCBI Taxonomy" id="295319"/>
    <lineage>
        <taxon>Bacteria</taxon>
        <taxon>Pseudomonadati</taxon>
        <taxon>Pseudomonadota</taxon>
        <taxon>Gammaproteobacteria</taxon>
        <taxon>Enterobacterales</taxon>
        <taxon>Enterobacteriaceae</taxon>
        <taxon>Salmonella</taxon>
    </lineage>
</organism>
<comment type="function">
    <text evidence="2">Involved in peptide bond synthesis. Alleviates ribosome stalling that occurs when 3 or more consecutive Pro residues or the sequence PPG is present in a protein, possibly by augmenting the peptidyl transferase activity of the ribosome. Modification of Lys-34 is required for alleviation.</text>
</comment>
<comment type="pathway">
    <text evidence="2">Protein biosynthesis; polypeptide chain elongation.</text>
</comment>
<comment type="subcellular location">
    <subcellularLocation>
        <location evidence="2">Cytoplasm</location>
    </subcellularLocation>
</comment>
<comment type="PTM">
    <text evidence="2">Is beta-lysylated on the epsilon-amino group of Lys-34 by the combined action of EpmA and EpmB, and then hydroxylated on the C5 position of the same residue by EpmC. Lysylation is critical for the stimulatory effect of EF-P on peptide-bond formation. The lysylation moiety would extend toward the peptidyltransferase center and stabilize the terminal 3-CCA end of the tRNA. The hydroxylation of the C5 position on Lys-34 would allow additional potential stabilizing hydrogen-bond interactions with the P-tRNA.</text>
</comment>
<comment type="similarity">
    <text evidence="2">Belongs to the elongation factor P family.</text>
</comment>
<sequence>MATYYSNDFRSGLKIMLDGEPYAVESSEFVKPGKGQAFARVKLRRLLTGTRVEKTFKSTDSAEGADVVDMNLTYLYNDGEFWHFMNNETFEQLSADAKAIGDNAKWLLDQAECIVTLWNGQPISVTPPNFVELEIVDTDPGLKGDTAGTGGKPATLSTGAVVKVPLFVQIGEVIKVDTRSGEYVSRVK</sequence>
<feature type="initiator methionine" description="Removed" evidence="1">
    <location>
        <position position="1"/>
    </location>
</feature>
<feature type="chain" id="PRO_0000094322" description="Elongation factor P">
    <location>
        <begin position="2"/>
        <end position="188"/>
    </location>
</feature>
<feature type="modified residue" description="N6-(3,6-diaminohexanoyl)-5-hydroxylysine" evidence="2">
    <location>
        <position position="34"/>
    </location>
</feature>